<reference key="1">
    <citation type="journal article" date="2006" name="Genomics">
        <title>Diversity and evolution of conotoxins based on gene expression profiling of Conus litteratus.</title>
        <authorList>
            <person name="Pi C."/>
            <person name="Liu J."/>
            <person name="Peng C."/>
            <person name="Liu Y."/>
            <person name="Jiang X."/>
            <person name="Zhao Y."/>
            <person name="Tang S."/>
            <person name="Wang L."/>
            <person name="Dong M."/>
            <person name="Chen S."/>
            <person name="Xu A."/>
        </authorList>
    </citation>
    <scope>NUCLEOTIDE SEQUENCE [MRNA]</scope>
    <source>
        <tissue>Venom duct</tissue>
    </source>
</reference>
<feature type="signal peptide" evidence="2">
    <location>
        <begin position="1"/>
        <end position="19"/>
    </location>
</feature>
<feature type="propeptide" id="PRO_0000315441" evidence="1">
    <location>
        <begin position="20"/>
        <end position="54"/>
    </location>
</feature>
<feature type="peptide" id="PRO_0000315442" description="Conotoxin Lt5.11">
    <location>
        <begin position="55"/>
        <end position="68"/>
    </location>
</feature>
<evidence type="ECO:0000250" key="1"/>
<evidence type="ECO:0000255" key="2"/>
<evidence type="ECO:0000303" key="3">
    <source>
    </source>
</evidence>
<evidence type="ECO:0000305" key="4"/>
<evidence type="ECO:0000305" key="5">
    <source>
    </source>
</evidence>
<evidence type="ECO:0000312" key="6">
    <source>
        <dbReference type="EMBL" id="ABC70198.1"/>
    </source>
</evidence>
<protein>
    <recommendedName>
        <fullName evidence="3">Conotoxin Lt5.11</fullName>
    </recommendedName>
    <alternativeName>
        <fullName evidence="6">Lt5k</fullName>
    </alternativeName>
</protein>
<organism>
    <name type="scientific">Conus litteratus</name>
    <name type="common">Lettered cone</name>
    <dbReference type="NCBI Taxonomy" id="89445"/>
    <lineage>
        <taxon>Eukaryota</taxon>
        <taxon>Metazoa</taxon>
        <taxon>Spiralia</taxon>
        <taxon>Lophotrochozoa</taxon>
        <taxon>Mollusca</taxon>
        <taxon>Gastropoda</taxon>
        <taxon>Caenogastropoda</taxon>
        <taxon>Neogastropoda</taxon>
        <taxon>Conoidea</taxon>
        <taxon>Conidae</taxon>
        <taxon>Conus</taxon>
        <taxon>Elisaconus</taxon>
    </lineage>
</organism>
<dbReference type="EMBL" id="DQ345362">
    <property type="protein sequence ID" value="ABC70198.1"/>
    <property type="molecule type" value="mRNA"/>
</dbReference>
<dbReference type="ConoServer" id="1149">
    <property type="toxin name" value="Lt5k precursor"/>
</dbReference>
<dbReference type="GO" id="GO:0005576">
    <property type="term" value="C:extracellular region"/>
    <property type="evidence" value="ECO:0007669"/>
    <property type="project" value="UniProtKB-SubCell"/>
</dbReference>
<dbReference type="GO" id="GO:0090729">
    <property type="term" value="F:toxin activity"/>
    <property type="evidence" value="ECO:0007669"/>
    <property type="project" value="UniProtKB-KW"/>
</dbReference>
<dbReference type="InterPro" id="IPR031565">
    <property type="entry name" value="T-conotoxin"/>
</dbReference>
<dbReference type="Pfam" id="PF16981">
    <property type="entry name" value="Chi-conotoxin"/>
    <property type="match status" value="1"/>
</dbReference>
<name>CT5B_CONLT</name>
<keyword id="KW-1015">Disulfide bond</keyword>
<keyword id="KW-0964">Secreted</keyword>
<keyword id="KW-0732">Signal</keyword>
<keyword id="KW-0800">Toxin</keyword>
<comment type="subcellular location">
    <subcellularLocation>
        <location evidence="5">Secreted</location>
    </subcellularLocation>
</comment>
<comment type="tissue specificity">
    <text evidence="5">Expressed by the venom duct.</text>
</comment>
<comment type="domain">
    <text evidence="4">The cysteine framework is V (CC-CC).</text>
</comment>
<comment type="PTM">
    <text evidence="4">Contains 2 disulfide bonds that can be either 'C1-C3, C2-C4' or 'C1-C4, C2-C3', since these disulfide connectivities have been observed for conotoxins with cysteine framework V (for examples, see AC P0DQQ7 and AC P81755).</text>
</comment>
<comment type="similarity">
    <text evidence="4">Belongs to the conotoxin T superfamily.</text>
</comment>
<sequence>MLCLPVFIILLLLASPAAPKSLETRIQNDLIRAGLTDADLKTEKGFLSGLLNVADSVCCKVDTSCCSN</sequence>
<accession>Q1A3Q2</accession>
<proteinExistence type="inferred from homology"/>